<gene>
    <name evidence="1" type="primary">trmA</name>
    <name type="ordered locus">E2348C_4281</name>
</gene>
<name>TRMA_ECO27</name>
<comment type="function">
    <text evidence="1">Dual-specificity methyltransferase that catalyzes the formation of 5-methyluridine at position 54 (m5U54) in all tRNAs, and that of position 341 (m5U341) in tmRNA (transfer-mRNA).</text>
</comment>
<comment type="catalytic activity">
    <reaction evidence="1">
        <text>uridine(54) in tRNA + S-adenosyl-L-methionine = 5-methyluridine(54) in tRNA + S-adenosyl-L-homocysteine + H(+)</text>
        <dbReference type="Rhea" id="RHEA:42712"/>
        <dbReference type="Rhea" id="RHEA-COMP:10167"/>
        <dbReference type="Rhea" id="RHEA-COMP:10193"/>
        <dbReference type="ChEBI" id="CHEBI:15378"/>
        <dbReference type="ChEBI" id="CHEBI:57856"/>
        <dbReference type="ChEBI" id="CHEBI:59789"/>
        <dbReference type="ChEBI" id="CHEBI:65315"/>
        <dbReference type="ChEBI" id="CHEBI:74447"/>
        <dbReference type="EC" id="2.1.1.35"/>
    </reaction>
</comment>
<comment type="catalytic activity">
    <reaction evidence="1">
        <text>uridine(341) in tmRNA + S-adenosyl-L-methionine = 5-methyluridine(341) in tmRNA + S-adenosyl-L-homocysteine + H(+)</text>
        <dbReference type="Rhea" id="RHEA:43612"/>
        <dbReference type="Rhea" id="RHEA-COMP:10630"/>
        <dbReference type="Rhea" id="RHEA-COMP:10631"/>
        <dbReference type="ChEBI" id="CHEBI:15378"/>
        <dbReference type="ChEBI" id="CHEBI:57856"/>
        <dbReference type="ChEBI" id="CHEBI:59789"/>
        <dbReference type="ChEBI" id="CHEBI:65315"/>
        <dbReference type="ChEBI" id="CHEBI:74447"/>
    </reaction>
</comment>
<comment type="similarity">
    <text evidence="1">Belongs to the class I-like SAM-binding methyltransferase superfamily. RNA M5U methyltransferase family. TrmA subfamily.</text>
</comment>
<dbReference type="EC" id="2.1.1.-" evidence="1"/>
<dbReference type="EC" id="2.1.1.35" evidence="1"/>
<dbReference type="EMBL" id="FM180568">
    <property type="protein sequence ID" value="CAS11829.1"/>
    <property type="molecule type" value="Genomic_DNA"/>
</dbReference>
<dbReference type="RefSeq" id="WP_000187028.1">
    <property type="nucleotide sequence ID" value="NC_011601.1"/>
</dbReference>
<dbReference type="SMR" id="B7UNU5"/>
<dbReference type="GeneID" id="86944503"/>
<dbReference type="KEGG" id="ecg:E2348C_4281"/>
<dbReference type="HOGENOM" id="CLU_043022_0_0_6"/>
<dbReference type="Proteomes" id="UP000008205">
    <property type="component" value="Chromosome"/>
</dbReference>
<dbReference type="GO" id="GO:0005829">
    <property type="term" value="C:cytosol"/>
    <property type="evidence" value="ECO:0007669"/>
    <property type="project" value="TreeGrafter"/>
</dbReference>
<dbReference type="GO" id="GO:0019843">
    <property type="term" value="F:rRNA binding"/>
    <property type="evidence" value="ECO:0007669"/>
    <property type="project" value="TreeGrafter"/>
</dbReference>
<dbReference type="GO" id="GO:0030697">
    <property type="term" value="F:tRNA (uracil(54)-C5)-methyltransferase activity, S-adenosyl methionine-dependent"/>
    <property type="evidence" value="ECO:0007669"/>
    <property type="project" value="UniProtKB-UniRule"/>
</dbReference>
<dbReference type="GO" id="GO:0000049">
    <property type="term" value="F:tRNA binding"/>
    <property type="evidence" value="ECO:0007669"/>
    <property type="project" value="TreeGrafter"/>
</dbReference>
<dbReference type="GO" id="GO:0030488">
    <property type="term" value="P:tRNA methylation"/>
    <property type="evidence" value="ECO:0007669"/>
    <property type="project" value="UniProtKB-UniRule"/>
</dbReference>
<dbReference type="CDD" id="cd02440">
    <property type="entry name" value="AdoMet_MTases"/>
    <property type="match status" value="1"/>
</dbReference>
<dbReference type="FunFam" id="2.40.50.1070:FF:000001">
    <property type="entry name" value="tRNA/tmRNA (uracil-C(5))-methyltransferase"/>
    <property type="match status" value="1"/>
</dbReference>
<dbReference type="FunFam" id="3.40.50.150:FF:000012">
    <property type="entry name" value="tRNA/tmRNA (uracil-C(5))-methyltransferase"/>
    <property type="match status" value="1"/>
</dbReference>
<dbReference type="Gene3D" id="2.40.50.1070">
    <property type="match status" value="1"/>
</dbReference>
<dbReference type="Gene3D" id="3.40.50.150">
    <property type="entry name" value="Vaccinia Virus protein VP39"/>
    <property type="match status" value="1"/>
</dbReference>
<dbReference type="HAMAP" id="MF_01011">
    <property type="entry name" value="RNA_methyltr_TrmA"/>
    <property type="match status" value="1"/>
</dbReference>
<dbReference type="InterPro" id="IPR030390">
    <property type="entry name" value="MeTrfase_TrmA_AS"/>
</dbReference>
<dbReference type="InterPro" id="IPR030391">
    <property type="entry name" value="MeTrfase_TrmA_CS"/>
</dbReference>
<dbReference type="InterPro" id="IPR029063">
    <property type="entry name" value="SAM-dependent_MTases_sf"/>
</dbReference>
<dbReference type="InterPro" id="IPR011869">
    <property type="entry name" value="TrmA_MeTrfase"/>
</dbReference>
<dbReference type="InterPro" id="IPR010280">
    <property type="entry name" value="U5_MeTrfase_fam"/>
</dbReference>
<dbReference type="NCBIfam" id="TIGR02143">
    <property type="entry name" value="trmA_only"/>
    <property type="match status" value="1"/>
</dbReference>
<dbReference type="PANTHER" id="PTHR47790">
    <property type="entry name" value="TRNA/TMRNA (URACIL-C(5))-METHYLTRANSFERASE"/>
    <property type="match status" value="1"/>
</dbReference>
<dbReference type="PANTHER" id="PTHR47790:SF2">
    <property type="entry name" value="TRNA_TMRNA (URACIL-C(5))-METHYLTRANSFERASE"/>
    <property type="match status" value="1"/>
</dbReference>
<dbReference type="Pfam" id="PF05958">
    <property type="entry name" value="tRNA_U5-meth_tr"/>
    <property type="match status" value="1"/>
</dbReference>
<dbReference type="SUPFAM" id="SSF53335">
    <property type="entry name" value="S-adenosyl-L-methionine-dependent methyltransferases"/>
    <property type="match status" value="1"/>
</dbReference>
<dbReference type="PROSITE" id="PS51687">
    <property type="entry name" value="SAM_MT_RNA_M5U"/>
    <property type="match status" value="1"/>
</dbReference>
<dbReference type="PROSITE" id="PS01230">
    <property type="entry name" value="TRMA_1"/>
    <property type="match status" value="1"/>
</dbReference>
<dbReference type="PROSITE" id="PS01231">
    <property type="entry name" value="TRMA_2"/>
    <property type="match status" value="1"/>
</dbReference>
<organism>
    <name type="scientific">Escherichia coli O127:H6 (strain E2348/69 / EPEC)</name>
    <dbReference type="NCBI Taxonomy" id="574521"/>
    <lineage>
        <taxon>Bacteria</taxon>
        <taxon>Pseudomonadati</taxon>
        <taxon>Pseudomonadota</taxon>
        <taxon>Gammaproteobacteria</taxon>
        <taxon>Enterobacterales</taxon>
        <taxon>Enterobacteriaceae</taxon>
        <taxon>Escherichia</taxon>
    </lineage>
</organism>
<accession>B7UNU5</accession>
<reference key="1">
    <citation type="journal article" date="2009" name="J. Bacteriol.">
        <title>Complete genome sequence and comparative genome analysis of enteropathogenic Escherichia coli O127:H6 strain E2348/69.</title>
        <authorList>
            <person name="Iguchi A."/>
            <person name="Thomson N.R."/>
            <person name="Ogura Y."/>
            <person name="Saunders D."/>
            <person name="Ooka T."/>
            <person name="Henderson I.R."/>
            <person name="Harris D."/>
            <person name="Asadulghani M."/>
            <person name="Kurokawa K."/>
            <person name="Dean P."/>
            <person name="Kenny B."/>
            <person name="Quail M.A."/>
            <person name="Thurston S."/>
            <person name="Dougan G."/>
            <person name="Hayashi T."/>
            <person name="Parkhill J."/>
            <person name="Frankel G."/>
        </authorList>
    </citation>
    <scope>NUCLEOTIDE SEQUENCE [LARGE SCALE GENOMIC DNA]</scope>
    <source>
        <strain>E2348/69 / EPEC</strain>
    </source>
</reference>
<sequence length="366" mass="41966">MTPEHLPTEQYEAQLAEKVVRLQSMMAPFSDLVPEVFRSPVSHYRMRAEFRIWHDGDDLYHIIFDQQTKSRIRVDSFPAASELINQLMTAMIAGVRNNPVLRHKLFQIDYLTTLSNQAVVSLLYHKKLDDEWRQQAEALRDALRAQNLNVHLIGRATKTKIELDQDYIDERLPVAGKEMIYRQVENSFTQPNAAMNIQMLEWALDVTKGSKGDLLELYCGNGNFSLALARNFDRVLATEIAKPSVAAAQYNIAANHIDNVQIIRMAAEEFTQAMNGVREFNRLQGIDLKSYQCETIFVDPPRSGLDSETEKMVQAYPRILYISCNPETLCKNLETLSQTHKVERLALFDQFPYTHHMECGVLLTAK</sequence>
<evidence type="ECO:0000255" key="1">
    <source>
        <dbReference type="HAMAP-Rule" id="MF_01011"/>
    </source>
</evidence>
<feature type="chain" id="PRO_1000148885" description="tRNA/tmRNA (uracil-C(5))-methyltransferase">
    <location>
        <begin position="1"/>
        <end position="366"/>
    </location>
</feature>
<feature type="active site" description="Nucleophile" evidence="1">
    <location>
        <position position="324"/>
    </location>
</feature>
<feature type="active site" description="Proton acceptor" evidence="1">
    <location>
        <position position="358"/>
    </location>
</feature>
<feature type="binding site" evidence="1">
    <location>
        <position position="190"/>
    </location>
    <ligand>
        <name>S-adenosyl-L-methionine</name>
        <dbReference type="ChEBI" id="CHEBI:59789"/>
    </ligand>
</feature>
<feature type="binding site" evidence="1">
    <location>
        <position position="218"/>
    </location>
    <ligand>
        <name>S-adenosyl-L-methionine</name>
        <dbReference type="ChEBI" id="CHEBI:59789"/>
    </ligand>
</feature>
<feature type="binding site" evidence="1">
    <location>
        <position position="223"/>
    </location>
    <ligand>
        <name>S-adenosyl-L-methionine</name>
        <dbReference type="ChEBI" id="CHEBI:59789"/>
    </ligand>
</feature>
<feature type="binding site" evidence="1">
    <location>
        <position position="239"/>
    </location>
    <ligand>
        <name>S-adenosyl-L-methionine</name>
        <dbReference type="ChEBI" id="CHEBI:59789"/>
    </ligand>
</feature>
<feature type="binding site" evidence="1">
    <location>
        <position position="299"/>
    </location>
    <ligand>
        <name>S-adenosyl-L-methionine</name>
        <dbReference type="ChEBI" id="CHEBI:59789"/>
    </ligand>
</feature>
<proteinExistence type="inferred from homology"/>
<protein>
    <recommendedName>
        <fullName evidence="1">tRNA/tmRNA (uracil-C(5))-methyltransferase</fullName>
        <ecNumber evidence="1">2.1.1.-</ecNumber>
        <ecNumber evidence="1">2.1.1.35</ecNumber>
    </recommendedName>
    <alternativeName>
        <fullName evidence="1">tRNA (uracil(54)-C(5))-methyltransferase</fullName>
    </alternativeName>
    <alternativeName>
        <fullName evidence="1">tRNA(m5U54)-methyltransferase</fullName>
        <shortName evidence="1">RUMT</shortName>
    </alternativeName>
    <alternativeName>
        <fullName evidence="1">tmRNA (uracil(341)-C(5))-methyltransferase</fullName>
    </alternativeName>
</protein>
<keyword id="KW-0489">Methyltransferase</keyword>
<keyword id="KW-1185">Reference proteome</keyword>
<keyword id="KW-0949">S-adenosyl-L-methionine</keyword>
<keyword id="KW-0808">Transferase</keyword>
<keyword id="KW-0819">tRNA processing</keyword>